<organism>
    <name type="scientific">Neisseria meningitidis serogroup B (strain ATCC BAA-335 / MC58)</name>
    <dbReference type="NCBI Taxonomy" id="122586"/>
    <lineage>
        <taxon>Bacteria</taxon>
        <taxon>Pseudomonadati</taxon>
        <taxon>Pseudomonadota</taxon>
        <taxon>Betaproteobacteria</taxon>
        <taxon>Neisseriales</taxon>
        <taxon>Neisseriaceae</taxon>
        <taxon>Neisseria</taxon>
    </lineage>
</organism>
<dbReference type="EC" id="3.1.1.31"/>
<dbReference type="EMBL" id="AE002098">
    <property type="protein sequence ID" value="AAF41755.1"/>
    <property type="molecule type" value="Genomic_DNA"/>
</dbReference>
<dbReference type="PIR" id="F81089">
    <property type="entry name" value="F81089"/>
</dbReference>
<dbReference type="RefSeq" id="NP_274405.1">
    <property type="nucleotide sequence ID" value="NC_003112.2"/>
</dbReference>
<dbReference type="RefSeq" id="WP_002213145.1">
    <property type="nucleotide sequence ID" value="NC_003112.2"/>
</dbReference>
<dbReference type="SMR" id="P63337"/>
<dbReference type="STRING" id="122586.NMB1391"/>
<dbReference type="PaxDb" id="122586-NMB1391"/>
<dbReference type="GeneID" id="93387970"/>
<dbReference type="KEGG" id="nme:NMB1391"/>
<dbReference type="PATRIC" id="fig|122586.8.peg.1744"/>
<dbReference type="HOGENOM" id="CLU_053947_2_1_4"/>
<dbReference type="InParanoid" id="P63337"/>
<dbReference type="OrthoDB" id="9810967at2"/>
<dbReference type="UniPathway" id="UPA00115">
    <property type="reaction ID" value="UER00409"/>
</dbReference>
<dbReference type="Proteomes" id="UP000000425">
    <property type="component" value="Chromosome"/>
</dbReference>
<dbReference type="GO" id="GO:0017057">
    <property type="term" value="F:6-phosphogluconolactonase activity"/>
    <property type="evidence" value="ECO:0007669"/>
    <property type="project" value="UniProtKB-EC"/>
</dbReference>
<dbReference type="GO" id="GO:0005975">
    <property type="term" value="P:carbohydrate metabolic process"/>
    <property type="evidence" value="ECO:0007669"/>
    <property type="project" value="InterPro"/>
</dbReference>
<dbReference type="GO" id="GO:0006098">
    <property type="term" value="P:pentose-phosphate shunt"/>
    <property type="evidence" value="ECO:0007669"/>
    <property type="project" value="UniProtKB-UniPathway"/>
</dbReference>
<dbReference type="CDD" id="cd01400">
    <property type="entry name" value="6PGL"/>
    <property type="match status" value="1"/>
</dbReference>
<dbReference type="FunFam" id="3.40.50.1360:FF:000021">
    <property type="entry name" value="6-phosphogluconolactonase"/>
    <property type="match status" value="1"/>
</dbReference>
<dbReference type="Gene3D" id="3.40.50.1360">
    <property type="match status" value="1"/>
</dbReference>
<dbReference type="InterPro" id="IPR005900">
    <property type="entry name" value="6-phosphogluconolactonase_DevB"/>
</dbReference>
<dbReference type="InterPro" id="IPR006148">
    <property type="entry name" value="Glc/Gal-6P_isomerase"/>
</dbReference>
<dbReference type="InterPro" id="IPR037171">
    <property type="entry name" value="NagB/RpiA_transferase-like"/>
</dbReference>
<dbReference type="InterPro" id="IPR039104">
    <property type="entry name" value="PGLS"/>
</dbReference>
<dbReference type="NCBIfam" id="TIGR01198">
    <property type="entry name" value="pgl"/>
    <property type="match status" value="1"/>
</dbReference>
<dbReference type="PANTHER" id="PTHR11054">
    <property type="entry name" value="6-PHOSPHOGLUCONOLACTONASE"/>
    <property type="match status" value="1"/>
</dbReference>
<dbReference type="PANTHER" id="PTHR11054:SF0">
    <property type="entry name" value="6-PHOSPHOGLUCONOLACTONASE"/>
    <property type="match status" value="1"/>
</dbReference>
<dbReference type="Pfam" id="PF01182">
    <property type="entry name" value="Glucosamine_iso"/>
    <property type="match status" value="1"/>
</dbReference>
<dbReference type="SUPFAM" id="SSF100950">
    <property type="entry name" value="NagB/RpiA/CoA transferase-like"/>
    <property type="match status" value="1"/>
</dbReference>
<accession>P63337</accession>
<accession>Q9JR64</accession>
<keyword id="KW-0378">Hydrolase</keyword>
<keyword id="KW-1185">Reference proteome</keyword>
<proteinExistence type="inferred from homology"/>
<evidence type="ECO:0000305" key="1"/>
<name>6PGL_NEIMB</name>
<sequence>MFVWHEYENAAEAAQSLADAVADALQGALDEKGGAVLAVSGGRSPIAFFNALSQKDLDWKNVGITLADERIVPTVHADSNTGLVREYLLKNKAEAAMWIPMVEDGKTETELHPDAVVDYALKHYKQPDVLVLGMGNDGHTASIFPKAPQFQTAIDGSAGVALVHTTPVTAPHERVSMTLDAIAHTGHVFLAIRGEEKKAVFDQAAQGENREYPINLVLNHQGVNCHVFYAE</sequence>
<comment type="function">
    <text>Hydrolysis of 6-phosphogluconolactone to 6-phosphogluconate.</text>
</comment>
<comment type="catalytic activity">
    <reaction>
        <text>6-phospho-D-glucono-1,5-lactone + H2O = 6-phospho-D-gluconate + H(+)</text>
        <dbReference type="Rhea" id="RHEA:12556"/>
        <dbReference type="ChEBI" id="CHEBI:15377"/>
        <dbReference type="ChEBI" id="CHEBI:15378"/>
        <dbReference type="ChEBI" id="CHEBI:57955"/>
        <dbReference type="ChEBI" id="CHEBI:58759"/>
        <dbReference type="EC" id="3.1.1.31"/>
    </reaction>
</comment>
<comment type="pathway">
    <text>Carbohydrate degradation; pentose phosphate pathway; D-ribulose 5-phosphate from D-glucose 6-phosphate (oxidative stage): step 2/3.</text>
</comment>
<comment type="similarity">
    <text evidence="1">Belongs to the glucosamine/galactosamine-6-phosphate isomerase family. 6-phosphogluconolactonase subfamily.</text>
</comment>
<gene>
    <name type="primary">pgl</name>
    <name type="ordered locus">NMB1391</name>
</gene>
<feature type="chain" id="PRO_0000090098" description="6-phosphogluconolactonase">
    <location>
        <begin position="1"/>
        <end position="231"/>
    </location>
</feature>
<reference key="1">
    <citation type="journal article" date="2000" name="Science">
        <title>Complete genome sequence of Neisseria meningitidis serogroup B strain MC58.</title>
        <authorList>
            <person name="Tettelin H."/>
            <person name="Saunders N.J."/>
            <person name="Heidelberg J.F."/>
            <person name="Jeffries A.C."/>
            <person name="Nelson K.E."/>
            <person name="Eisen J.A."/>
            <person name="Ketchum K.A."/>
            <person name="Hood D.W."/>
            <person name="Peden J.F."/>
            <person name="Dodson R.J."/>
            <person name="Nelson W.C."/>
            <person name="Gwinn M.L."/>
            <person name="DeBoy R.T."/>
            <person name="Peterson J.D."/>
            <person name="Hickey E.K."/>
            <person name="Haft D.H."/>
            <person name="Salzberg S.L."/>
            <person name="White O."/>
            <person name="Fleischmann R.D."/>
            <person name="Dougherty B.A."/>
            <person name="Mason T.M."/>
            <person name="Ciecko A."/>
            <person name="Parksey D.S."/>
            <person name="Blair E."/>
            <person name="Cittone H."/>
            <person name="Clark E.B."/>
            <person name="Cotton M.D."/>
            <person name="Utterback T.R."/>
            <person name="Khouri H.M."/>
            <person name="Qin H."/>
            <person name="Vamathevan J.J."/>
            <person name="Gill J."/>
            <person name="Scarlato V."/>
            <person name="Masignani V."/>
            <person name="Pizza M."/>
            <person name="Grandi G."/>
            <person name="Sun L."/>
            <person name="Smith H.O."/>
            <person name="Fraser C.M."/>
            <person name="Moxon E.R."/>
            <person name="Rappuoli R."/>
            <person name="Venter J.C."/>
        </authorList>
    </citation>
    <scope>NUCLEOTIDE SEQUENCE [LARGE SCALE GENOMIC DNA]</scope>
    <source>
        <strain>ATCC BAA-335 / MC58</strain>
    </source>
</reference>
<protein>
    <recommendedName>
        <fullName>6-phosphogluconolactonase</fullName>
        <shortName>6PGL</shortName>
        <ecNumber>3.1.1.31</ecNumber>
    </recommendedName>
</protein>